<reference key="1">
    <citation type="journal article" date="2007" name="Nature">
        <title>Evolution of genes and genomes on the Drosophila phylogeny.</title>
        <authorList>
            <consortium name="Drosophila 12 genomes consortium"/>
        </authorList>
    </citation>
    <scope>NUCLEOTIDE SEQUENCE [LARGE SCALE GENOMIC DNA]</scope>
    <source>
        <strain>Rob3c / Tucson 14021-0248.25</strain>
    </source>
</reference>
<evidence type="ECO:0000250" key="1"/>
<evidence type="ECO:0000250" key="2">
    <source>
        <dbReference type="UniProtKB" id="Q8ND04"/>
    </source>
</evidence>
<evidence type="ECO:0000256" key="3">
    <source>
        <dbReference type="SAM" id="MobiDB-lite"/>
    </source>
</evidence>
<evidence type="ECO:0000305" key="4"/>
<comment type="function">
    <text evidence="1">Involved in nonsense-mediated decay (NMD) of mRNAs containing premature stop codons. Probable component of kinase complex containing nonC and recruited to stalled ribosomes (By similarity).</text>
</comment>
<comment type="similarity">
    <text evidence="4">Belongs to the SMG8 family.</text>
</comment>
<organism>
    <name type="scientific">Drosophila sechellia</name>
    <name type="common">Fruit fly</name>
    <dbReference type="NCBI Taxonomy" id="7238"/>
    <lineage>
        <taxon>Eukaryota</taxon>
        <taxon>Metazoa</taxon>
        <taxon>Ecdysozoa</taxon>
        <taxon>Arthropoda</taxon>
        <taxon>Hexapoda</taxon>
        <taxon>Insecta</taxon>
        <taxon>Pterygota</taxon>
        <taxon>Neoptera</taxon>
        <taxon>Endopterygota</taxon>
        <taxon>Diptera</taxon>
        <taxon>Brachycera</taxon>
        <taxon>Muscomorpha</taxon>
        <taxon>Ephydroidea</taxon>
        <taxon>Drosophilidae</taxon>
        <taxon>Drosophila</taxon>
        <taxon>Sophophora</taxon>
    </lineage>
</organism>
<name>SMG8_DROSE</name>
<gene>
    <name type="ORF">GM11479</name>
</gene>
<dbReference type="EMBL" id="CH480818">
    <property type="protein sequence ID" value="EDW52497.1"/>
    <property type="molecule type" value="Genomic_DNA"/>
</dbReference>
<dbReference type="RefSeq" id="XP_002036574.1">
    <property type="nucleotide sequence ID" value="XM_002036538.1"/>
</dbReference>
<dbReference type="SMR" id="B4HWV2"/>
<dbReference type="STRING" id="7238.B4HWV2"/>
<dbReference type="EnsemblMetazoa" id="FBtr0194464">
    <property type="protein sequence ID" value="FBpp0192956"/>
    <property type="gene ID" value="FBgn0166422"/>
</dbReference>
<dbReference type="HOGENOM" id="CLU_008116_0_0_1"/>
<dbReference type="OMA" id="HVCHIVV"/>
<dbReference type="PhylomeDB" id="B4HWV2"/>
<dbReference type="Proteomes" id="UP000001292">
    <property type="component" value="Unassembled WGS sequence"/>
</dbReference>
<dbReference type="GO" id="GO:0000184">
    <property type="term" value="P:nuclear-transcribed mRNA catabolic process, nonsense-mediated decay"/>
    <property type="evidence" value="ECO:0000250"/>
    <property type="project" value="UniProtKB"/>
</dbReference>
<dbReference type="InterPro" id="IPR019354">
    <property type="entry name" value="SMG8-like"/>
</dbReference>
<dbReference type="PANTHER" id="PTHR13091">
    <property type="entry name" value="AMPLIFIED IN BREAST CANCER 2-RELATED"/>
    <property type="match status" value="1"/>
</dbReference>
<dbReference type="PANTHER" id="PTHR13091:SF0">
    <property type="entry name" value="NONSENSE-MEDIATED MRNA DECAY FACTOR SMG8"/>
    <property type="match status" value="1"/>
</dbReference>
<dbReference type="Pfam" id="PF10220">
    <property type="entry name" value="Smg8_Smg9"/>
    <property type="match status" value="1"/>
</dbReference>
<accession>B4HWV2</accession>
<protein>
    <recommendedName>
        <fullName evidence="2">Nonsense-mediated mRNA decay factor SMG8</fullName>
    </recommendedName>
    <alternativeName>
        <fullName>Protein smg-8 homolog</fullName>
    </alternativeName>
</protein>
<sequence length="927" mass="105240">MLDDYYTWTYPDIPENVAQELLQLNGSLVVVGVVGRSDCDLANKMLAFGMEPPDDHTPEDGQIQCYYKPGTFSLLLHFESTYDAEISGQMIDVCIEDVDTPFDIDSFFERIRCRFVRMMLLALHVCHIVVWAKFAREQHLMQFLPQMLRETPAARISERTRLCAPRILFLFENFPGDEPKTRESVSTCEFQMEDCIYELLRRYNIVTNSSSNSLVALPNNKQFVFFNAHEELRDDKLLKAIDCLNETMYKPDLKEEEEDLEILAMAPFDGFVKPFTMPVYEKEWENLQYQEDHTVWNFLQRHVHDALVGCFDAGSFKQHAQQGPFQLLNSREWHDCMATMHKLLVENAKDPDHETSNEEYKLFLKNFDEDLNYEKKFWAHLCELGLKKGIAAYKNAAPANYGTATHRQLLADATLAFEEEGRGPQAQAALAKLAAICHKHWEDGRQQCEQLSLRSHPCTLPKNMPHEKHNSGVIHISTCNCGRTQGRREDPFNLRQANYEFYEHIAQMCNLCVKVKQYQFPIFEPSVSDYRAAAFEAAFPLLNTGKSGAPQDEDAGEDEAEEEEGQERELPTKKQLQNTASNCCSHPLSPTFGSDLNMSIAGFGASLKESQARSEQLSNSEQNTTRSGSSSVDTENELVVELQEPAKKEAREDVGPTDAVSTSTTEYLPGLVHTVSNFDLLPLFPSWSLACVGPSSIYSHNTGLQEHFQSGFLSGANFLLPWDVQLRLVHALKQQYQHHHHGKKQQRWKKQGDRLSLKIFVGMEYECSRGHRFMMCAPDRVLRGGADIERDTCSKVVHNNMPLYYPCPCRSQKNFLAQLMRIHVVTPKAPVNIIVDPKVCVGRYTFTLGSILPPRLSQSAYWIIRLPYVYQGDDVLIAPPDQLDPDYPLAGGYLLPGMFGVVETDPTLDLNEPGMMGASAAGNFTRI</sequence>
<feature type="chain" id="PRO_0000378178" description="Nonsense-mediated mRNA decay factor SMG8">
    <location>
        <begin position="1"/>
        <end position="927"/>
    </location>
</feature>
<feature type="region of interest" description="Disordered" evidence="3">
    <location>
        <begin position="543"/>
        <end position="581"/>
    </location>
</feature>
<feature type="region of interest" description="Disordered" evidence="3">
    <location>
        <begin position="611"/>
        <end position="636"/>
    </location>
</feature>
<feature type="region of interest" description="Disordered" evidence="3">
    <location>
        <begin position="643"/>
        <end position="662"/>
    </location>
</feature>
<feature type="compositionally biased region" description="Acidic residues" evidence="3">
    <location>
        <begin position="551"/>
        <end position="566"/>
    </location>
</feature>
<feature type="compositionally biased region" description="Polar residues" evidence="3">
    <location>
        <begin position="613"/>
        <end position="633"/>
    </location>
</feature>
<feature type="compositionally biased region" description="Basic and acidic residues" evidence="3">
    <location>
        <begin position="644"/>
        <end position="654"/>
    </location>
</feature>
<proteinExistence type="inferred from homology"/>
<keyword id="KW-0866">Nonsense-mediated mRNA decay</keyword>
<keyword id="KW-1185">Reference proteome</keyword>